<evidence type="ECO:0000255" key="1"/>
<evidence type="ECO:0000256" key="2">
    <source>
        <dbReference type="SAM" id="MobiDB-lite"/>
    </source>
</evidence>
<evidence type="ECO:0000305" key="3"/>
<feature type="chain" id="PRO_0000059416" description="Collagen-like protein 1">
    <location>
        <begin position="1"/>
        <end position="945"/>
    </location>
</feature>
<feature type="domain" description="Collagen-like 1">
    <location>
        <begin position="83"/>
        <end position="142"/>
    </location>
</feature>
<feature type="domain" description="Collagen-like 2">
    <location>
        <begin position="146"/>
        <end position="205"/>
    </location>
</feature>
<feature type="domain" description="Collagen-like 3">
    <location>
        <begin position="257"/>
        <end position="376"/>
    </location>
</feature>
<feature type="domain" description="Collagen-like 4">
    <location>
        <begin position="383"/>
        <end position="442"/>
    </location>
</feature>
<feature type="domain" description="Collagen-like 5">
    <location>
        <begin position="488"/>
        <end position="547"/>
    </location>
</feature>
<feature type="domain" description="Collagen-like 6">
    <location>
        <begin position="554"/>
        <end position="613"/>
    </location>
</feature>
<feature type="domain" description="Collagen-like 7">
    <location>
        <begin position="635"/>
        <end position="694"/>
    </location>
</feature>
<feature type="region of interest" description="Disordered" evidence="2">
    <location>
        <begin position="80"/>
        <end position="226"/>
    </location>
</feature>
<feature type="region of interest" description="Disordered" evidence="2">
    <location>
        <begin position="257"/>
        <end position="441"/>
    </location>
</feature>
<feature type="region of interest" description="Disordered" evidence="2">
    <location>
        <begin position="488"/>
        <end position="712"/>
    </location>
</feature>
<feature type="region of interest" description="Disordered" evidence="2">
    <location>
        <begin position="733"/>
        <end position="768"/>
    </location>
</feature>
<feature type="compositionally biased region" description="Basic and acidic residues" evidence="2">
    <location>
        <begin position="109"/>
        <end position="145"/>
    </location>
</feature>
<feature type="compositionally biased region" description="Basic and acidic residues" evidence="2">
    <location>
        <begin position="168"/>
        <end position="208"/>
    </location>
</feature>
<feature type="compositionally biased region" description="Basic and acidic residues" evidence="2">
    <location>
        <begin position="488"/>
        <end position="687"/>
    </location>
</feature>
<feature type="compositionally biased region" description="Polar residues" evidence="2">
    <location>
        <begin position="703"/>
        <end position="712"/>
    </location>
</feature>
<feature type="compositionally biased region" description="Basic and acidic residues" evidence="2">
    <location>
        <begin position="736"/>
        <end position="754"/>
    </location>
</feature>
<feature type="compositionally biased region" description="Low complexity" evidence="2">
    <location>
        <begin position="756"/>
        <end position="765"/>
    </location>
</feature>
<feature type="glycosylation site" description="N-linked (GlcNAc...) asparagine; by host" evidence="1">
    <location>
        <position position="211"/>
    </location>
</feature>
<feature type="glycosylation site" description="N-linked (GlcNAc...) asparagine; by host" evidence="1">
    <location>
        <position position="442"/>
    </location>
</feature>
<feature type="glycosylation site" description="N-linked (GlcNAc...) asparagine; by host" evidence="1">
    <location>
        <position position="716"/>
    </location>
</feature>
<sequence>MSRITCPITDCKCKCNKNNCVYCVMGRQGLPGPKGSSGNSIYVGTGVPSPFLGNNGDLYIDSSTGLLYAKVNGVWVPQGSLKGDPGASGSKGEKGDKGSSGEAGLKGEQGTKGEQGDQGEQGDKGDKGDKGDVGAKGDQGDKGDQGDVGAKGDQGDKGDQGDVGAKGDQGDKGDKGDQGDKGDVGDPGVKGDKGDTGDKGDKGDKGDKGQNGSEILFGLGIPSPDLGEDGDVYIDTLTGNVYQKIGGVWVLETNIKGEKGDQGDKGDTGSKGDQGDKGDQGDKGDQGDKGDVGDKGNKGDTGSKGDVGDKGDVGDKGDKGDTGDKGDKGDTGDKGDKGDVGDKGDKGDVGDKGDVGDKGDVGDKGDKGDTGDKGDKGDIGDKGDKGDIGDKGDKGDIGDKGDKGDVGDKGDKGDKGDIGDKGDKGDIGDKGDKGDKGDKGENGSGILFGLGIPSPDLGEDGDIYIDTLTGNVYQKIGGVWVLETSIKGEKGDKGDTGDKGDTGDKGDTGDKGDTGDKGDTGDKGDVGDKGDVGDKGDVGDKGDVGDKGDKGDIGDKGDKGDLGDKGDKGDVGDKGDVGDKGDKGDIGDKGDKGDLGDKGDKGDVGDKGDKGDVGDKGDKGDIGDKGDKGDVGDKGDKGDIGDKGDKGDKGDVGSKGDKGDKGDVGDKGDKGDVGSKGDKGDKGDKGDVGPVGASILFGAGVPSPTTGENGDSYIDNSTGVFYLKINDVWVPQTNIKGDKGDKGDKGDKGDKGDTGDVGLKGDTGTPGSGPIIPYSSGLTPVALAVVAVAGGGIADTGASYDFGVSSPSVTLVGVNLDFTGPVQGLLPNMAWSAPRDTVITSLATAFQVSVAISAVLEPIFLRTQVYRELAANPGVFEPLAGAIVEFDVASSALISVGTVFRGIVTGLSIPVNAGDRLIVFANTRTTSLISVGTVTGFISSGLALA</sequence>
<gene>
    <name type="ordered locus">MIMI_L71</name>
</gene>
<keyword id="KW-0176">Collagen</keyword>
<keyword id="KW-0325">Glycoprotein</keyword>
<keyword id="KW-0379">Hydroxylation</keyword>
<keyword id="KW-1185">Reference proteome</keyword>
<keyword id="KW-0677">Repeat</keyword>
<keyword id="KW-0946">Virion</keyword>
<dbReference type="EMBL" id="AY653733">
    <property type="protein sequence ID" value="AAV50346.1"/>
    <property type="molecule type" value="Genomic_DNA"/>
</dbReference>
<dbReference type="KEGG" id="vg:9924664"/>
<dbReference type="OrthoDB" id="33298at10239"/>
<dbReference type="Proteomes" id="UP000001134">
    <property type="component" value="Genome"/>
</dbReference>
<dbReference type="GO" id="GO:0005615">
    <property type="term" value="C:extracellular space"/>
    <property type="evidence" value="ECO:0007669"/>
    <property type="project" value="TreeGrafter"/>
</dbReference>
<dbReference type="GO" id="GO:0044423">
    <property type="term" value="C:virion component"/>
    <property type="evidence" value="ECO:0007669"/>
    <property type="project" value="UniProtKB-KW"/>
</dbReference>
<dbReference type="InterPro" id="IPR008160">
    <property type="entry name" value="Collagen"/>
</dbReference>
<dbReference type="InterPro" id="IPR050149">
    <property type="entry name" value="Collagen_superfamily"/>
</dbReference>
<dbReference type="InterPro" id="IPR021210">
    <property type="entry name" value="Exosporium_BclB"/>
</dbReference>
<dbReference type="NCBIfam" id="TIGR03721">
    <property type="entry name" value="exospore_TM"/>
    <property type="match status" value="1"/>
</dbReference>
<dbReference type="PANTHER" id="PTHR24023">
    <property type="entry name" value="COLLAGEN ALPHA"/>
    <property type="match status" value="1"/>
</dbReference>
<dbReference type="PANTHER" id="PTHR24023:SF1082">
    <property type="entry name" value="COLLAGEN TRIPLE HELIX REPEAT"/>
    <property type="match status" value="1"/>
</dbReference>
<dbReference type="Pfam" id="PF01391">
    <property type="entry name" value="Collagen"/>
    <property type="match status" value="11"/>
</dbReference>
<proteinExistence type="predicted"/>
<reference key="1">
    <citation type="journal article" date="2004" name="Science">
        <title>The 1.2-megabase genome sequence of Mimivirus.</title>
        <authorList>
            <person name="Raoult D."/>
            <person name="Audic S."/>
            <person name="Robert C."/>
            <person name="Abergel C."/>
            <person name="Renesto P."/>
            <person name="Ogata H."/>
            <person name="La Scola B."/>
            <person name="Susan M."/>
            <person name="Claverie J.-M."/>
        </authorList>
    </citation>
    <scope>NUCLEOTIDE SEQUENCE [LARGE SCALE GENOMIC DNA]</scope>
    <source>
        <strain>Rowbotham-Bradford</strain>
    </source>
</reference>
<protein>
    <recommendedName>
        <fullName>Collagen-like protein 1</fullName>
    </recommendedName>
</protein>
<organism>
    <name type="scientific">Acanthamoeba polyphaga mimivirus</name>
    <name type="common">APMV</name>
    <dbReference type="NCBI Taxonomy" id="212035"/>
    <lineage>
        <taxon>Viruses</taxon>
        <taxon>Varidnaviria</taxon>
        <taxon>Bamfordvirae</taxon>
        <taxon>Nucleocytoviricota</taxon>
        <taxon>Megaviricetes</taxon>
        <taxon>Imitervirales</taxon>
        <taxon>Mimiviridae</taxon>
        <taxon>Megamimivirinae</taxon>
        <taxon>Mimivirus</taxon>
        <taxon>Mimivirus bradfordmassiliense</taxon>
    </lineage>
</organism>
<name>COLL1_MIMIV</name>
<accession>Q5UPE4</accession>
<comment type="function">
    <text evidence="3">May participate in the formation of a layer of cross-linked glycosylated fibrils at the viral surface thus giving it a hairy-like appearance.</text>
</comment>
<comment type="subcellular location">
    <subcellularLocation>
        <location>Virion</location>
    </subcellularLocation>
</comment>
<comment type="PTM">
    <text evidence="3">May be hydroxylated on lysine by the viral-encoded procollagen-lysine,2-oxoglutarate 5-dioxygenase.</text>
</comment>
<organismHost>
    <name type="scientific">Acanthamoeba polyphaga</name>
    <name type="common">Amoeba</name>
    <dbReference type="NCBI Taxonomy" id="5757"/>
</organismHost>